<keyword id="KW-0012">Acyltransferase</keyword>
<keyword id="KW-0997">Cell inner membrane</keyword>
<keyword id="KW-1003">Cell membrane</keyword>
<keyword id="KW-0444">Lipid biosynthesis</keyword>
<keyword id="KW-0443">Lipid metabolism</keyword>
<keyword id="KW-0472">Membrane</keyword>
<keyword id="KW-0594">Phospholipid biosynthesis</keyword>
<keyword id="KW-1208">Phospholipid metabolism</keyword>
<keyword id="KW-0808">Transferase</keyword>
<gene>
    <name evidence="1" type="primary">plsB</name>
    <name type="ordered locus">YPTS_0391</name>
</gene>
<proteinExistence type="inferred from homology"/>
<comment type="catalytic activity">
    <reaction evidence="1">
        <text>sn-glycerol 3-phosphate + an acyl-CoA = a 1-acyl-sn-glycero-3-phosphate + CoA</text>
        <dbReference type="Rhea" id="RHEA:15325"/>
        <dbReference type="ChEBI" id="CHEBI:57287"/>
        <dbReference type="ChEBI" id="CHEBI:57597"/>
        <dbReference type="ChEBI" id="CHEBI:57970"/>
        <dbReference type="ChEBI" id="CHEBI:58342"/>
        <dbReference type="EC" id="2.3.1.15"/>
    </reaction>
</comment>
<comment type="pathway">
    <text evidence="1">Phospholipid metabolism; CDP-diacylglycerol biosynthesis; CDP-diacylglycerol from sn-glycerol 3-phosphate: step 1/3.</text>
</comment>
<comment type="subcellular location">
    <subcellularLocation>
        <location evidence="1">Cell inner membrane</location>
        <topology evidence="1">Peripheral membrane protein</topology>
        <orientation evidence="1">Cytoplasmic side</orientation>
    </subcellularLocation>
</comment>
<comment type="domain">
    <text evidence="1">The HXXXXD motif is essential for acyltransferase activity and may constitute the binding site for the phosphate moiety of the glycerol-3-phosphate.</text>
</comment>
<comment type="similarity">
    <text evidence="1">Belongs to the GPAT/DAPAT family.</text>
</comment>
<accession>B2K1U5</accession>
<feature type="chain" id="PRO_1000123103" description="Glycerol-3-phosphate acyltransferase">
    <location>
        <begin position="1"/>
        <end position="831"/>
    </location>
</feature>
<feature type="region of interest" description="Disordered" evidence="2">
    <location>
        <begin position="801"/>
        <end position="831"/>
    </location>
</feature>
<feature type="short sequence motif" description="HXXXXD motif">
    <location>
        <begin position="304"/>
        <end position="309"/>
    </location>
</feature>
<reference key="1">
    <citation type="submission" date="2008-04" db="EMBL/GenBank/DDBJ databases">
        <title>Complete sequence of Yersinia pseudotuberculosis PB1/+.</title>
        <authorList>
            <person name="Copeland A."/>
            <person name="Lucas S."/>
            <person name="Lapidus A."/>
            <person name="Glavina del Rio T."/>
            <person name="Dalin E."/>
            <person name="Tice H."/>
            <person name="Bruce D."/>
            <person name="Goodwin L."/>
            <person name="Pitluck S."/>
            <person name="Munk A.C."/>
            <person name="Brettin T."/>
            <person name="Detter J.C."/>
            <person name="Han C."/>
            <person name="Tapia R."/>
            <person name="Schmutz J."/>
            <person name="Larimer F."/>
            <person name="Land M."/>
            <person name="Hauser L."/>
            <person name="Challacombe J.F."/>
            <person name="Green L."/>
            <person name="Lindler L.E."/>
            <person name="Nikolich M.P."/>
            <person name="Richardson P."/>
        </authorList>
    </citation>
    <scope>NUCLEOTIDE SEQUENCE [LARGE SCALE GENOMIC DNA]</scope>
    <source>
        <strain>PB1/+</strain>
    </source>
</reference>
<evidence type="ECO:0000255" key="1">
    <source>
        <dbReference type="HAMAP-Rule" id="MF_00393"/>
    </source>
</evidence>
<evidence type="ECO:0000256" key="2">
    <source>
        <dbReference type="SAM" id="MobiDB-lite"/>
    </source>
</evidence>
<organism>
    <name type="scientific">Yersinia pseudotuberculosis serotype IB (strain PB1/+)</name>
    <dbReference type="NCBI Taxonomy" id="502801"/>
    <lineage>
        <taxon>Bacteria</taxon>
        <taxon>Pseudomonadati</taxon>
        <taxon>Pseudomonadota</taxon>
        <taxon>Gammaproteobacteria</taxon>
        <taxon>Enterobacterales</taxon>
        <taxon>Yersiniaceae</taxon>
        <taxon>Yersinia</taxon>
    </lineage>
</organism>
<protein>
    <recommendedName>
        <fullName evidence="1">Glycerol-3-phosphate acyltransferase</fullName>
        <shortName evidence="1">GPAT</shortName>
        <ecNumber evidence="1">2.3.1.15</ecNumber>
    </recommendedName>
</protein>
<name>PLSB_YERPB</name>
<dbReference type="EC" id="2.3.1.15" evidence="1"/>
<dbReference type="EMBL" id="CP001048">
    <property type="protein sequence ID" value="ACC87380.1"/>
    <property type="molecule type" value="Genomic_DNA"/>
</dbReference>
<dbReference type="RefSeq" id="WP_012413439.1">
    <property type="nucleotide sequence ID" value="NZ_CP009780.1"/>
</dbReference>
<dbReference type="SMR" id="B2K1U5"/>
<dbReference type="KEGG" id="ypb:YPTS_0391"/>
<dbReference type="PATRIC" id="fig|502801.10.peg.4069"/>
<dbReference type="UniPathway" id="UPA00557">
    <property type="reaction ID" value="UER00612"/>
</dbReference>
<dbReference type="GO" id="GO:0005886">
    <property type="term" value="C:plasma membrane"/>
    <property type="evidence" value="ECO:0007669"/>
    <property type="project" value="UniProtKB-SubCell"/>
</dbReference>
<dbReference type="GO" id="GO:0004366">
    <property type="term" value="F:glycerol-3-phosphate O-acyltransferase activity"/>
    <property type="evidence" value="ECO:0007669"/>
    <property type="project" value="UniProtKB-UniRule"/>
</dbReference>
<dbReference type="GO" id="GO:0016024">
    <property type="term" value="P:CDP-diacylglycerol biosynthetic process"/>
    <property type="evidence" value="ECO:0007669"/>
    <property type="project" value="UniProtKB-UniRule"/>
</dbReference>
<dbReference type="GO" id="GO:0006631">
    <property type="term" value="P:fatty acid metabolic process"/>
    <property type="evidence" value="ECO:0007669"/>
    <property type="project" value="TreeGrafter"/>
</dbReference>
<dbReference type="CDD" id="cd07993">
    <property type="entry name" value="LPLAT_DHAPAT-like"/>
    <property type="match status" value="1"/>
</dbReference>
<dbReference type="HAMAP" id="MF_00393">
    <property type="entry name" value="Glyc3P_acyltrans"/>
    <property type="match status" value="1"/>
</dbReference>
<dbReference type="InterPro" id="IPR022284">
    <property type="entry name" value="GPAT/DHAPAT"/>
</dbReference>
<dbReference type="InterPro" id="IPR045520">
    <property type="entry name" value="GPAT/DHAPAT_C"/>
</dbReference>
<dbReference type="InterPro" id="IPR041728">
    <property type="entry name" value="GPAT/DHAPAT_LPLAT"/>
</dbReference>
<dbReference type="InterPro" id="IPR028354">
    <property type="entry name" value="GPAT_PlsB"/>
</dbReference>
<dbReference type="InterPro" id="IPR002123">
    <property type="entry name" value="Plipid/glycerol_acylTrfase"/>
</dbReference>
<dbReference type="NCBIfam" id="TIGR03703">
    <property type="entry name" value="plsB"/>
    <property type="match status" value="1"/>
</dbReference>
<dbReference type="NCBIfam" id="NF003441">
    <property type="entry name" value="PRK04974.1"/>
    <property type="match status" value="1"/>
</dbReference>
<dbReference type="PANTHER" id="PTHR12563:SF17">
    <property type="entry name" value="DIHYDROXYACETONE PHOSPHATE ACYLTRANSFERASE"/>
    <property type="match status" value="1"/>
</dbReference>
<dbReference type="PANTHER" id="PTHR12563">
    <property type="entry name" value="GLYCEROL-3-PHOSPHATE ACYLTRANSFERASE"/>
    <property type="match status" value="1"/>
</dbReference>
<dbReference type="Pfam" id="PF01553">
    <property type="entry name" value="Acyltransferase"/>
    <property type="match status" value="1"/>
</dbReference>
<dbReference type="Pfam" id="PF19277">
    <property type="entry name" value="GPAT_C"/>
    <property type="match status" value="1"/>
</dbReference>
<dbReference type="PIRSF" id="PIRSF500064">
    <property type="entry name" value="GPAT"/>
    <property type="match status" value="1"/>
</dbReference>
<dbReference type="PIRSF" id="PIRSF000437">
    <property type="entry name" value="GPAT_DHAPAT"/>
    <property type="match status" value="1"/>
</dbReference>
<dbReference type="SMART" id="SM00563">
    <property type="entry name" value="PlsC"/>
    <property type="match status" value="1"/>
</dbReference>
<dbReference type="SUPFAM" id="SSF69593">
    <property type="entry name" value="Glycerol-3-phosphate (1)-acyltransferase"/>
    <property type="match status" value="1"/>
</dbReference>
<sequence>MSGWRKIYYKLLNLPLKLLVKSKVIPADPVSELGLDPSRPILYVLPYNSKADLLTLRAQCLAQDLPDPLIPLEIDGVQLPSHVFIENGPRVFRYYVPKQESVKLFHDYLDLHRNNPALDIQMLPVSVMFGRSPGREGHGTPHLRVLNGVQKFFAVLWLGRDSFVRFSTTVSLRRMASEHGTDKTIAHKLARVARMHFSRQRLAAVGPSLPARQDLFKKLLASKAIEKAVADEARSKKISHEKAQQNAITLMEEIAANFSYEAVRLSDRVLSWTWNRLYQGINVHNAERVRQLAQDGHEIVYVPCHRSHMDYLLLSYVLYHQGLVPPHIAAGINLNFWPAGPIFRRLGAFFIRRTFKGNKLYSTVFREYLGELFTRGYSVEYFVEGGRSRTGRLLEPKTGTLSMTIQAMLRGGTRPITLVPIYIGYEHVMEVGTYAKELRGAIKEKENLLQMLRGLRKLRNLGQGYVNFGEPLPLTTYLNTHVPQWRDAIDPIEAQRPSWLTPAVNDLANQIMVRINNAAAANAMNLCSTALLASRQRSLTREQLLEQLDCYLQLMRNAPYAKDTTVPDKTPEELLNHALNMNKFEVEKDTIGDIIILPREQAVLMTYYRNNIQHLLILPSLIASMVMYHRRITRTELLHKISMIYPMLKAELFLHYSKEQLPETLDTLIDELARQQLICDKGSELVLNPARIRPLQLLAAGVRETLQRYAITLSLLSATPSINRGALEKESRIMAQRLSVLHGINAPEFFDKAVFSTLVATLREEGYISDSGDAIQEHTLEVYNMLSALMTPEVKLTIESVSMPAETSNQPEAPETPETPETPEPEGKTES</sequence>